<feature type="signal peptide" evidence="2">
    <location>
        <begin position="1"/>
        <end position="22"/>
    </location>
</feature>
<feature type="peptide" id="PRO_0000289821" description="Beta-defensin 107A">
    <location>
        <begin position="23"/>
        <end position="66"/>
    </location>
</feature>
<feature type="disulfide bond" evidence="1">
    <location>
        <begin position="37"/>
        <end position="51"/>
    </location>
</feature>
<feature type="disulfide bond" evidence="1">
    <location>
        <begin position="41"/>
        <end position="60"/>
    </location>
</feature>
<protein>
    <recommendedName>
        <fullName>Beta-defensin 107A</fullName>
    </recommendedName>
    <alternativeName>
        <fullName>Defensin, beta 107</fullName>
    </alternativeName>
    <alternativeName>
        <fullName>Defensin, beta 107A</fullName>
    </alternativeName>
</protein>
<gene>
    <name type="primary">DEFB107A</name>
    <name type="synonym">DEFB107</name>
</gene>
<sequence length="66" mass="7587">MKIFFFIFAALILLAQIFQARTAIHRALICKRMEGHCEAECLTFEVKIGGCRAELAPFCCKNRKKH</sequence>
<organism>
    <name type="scientific">Pongo pygmaeus</name>
    <name type="common">Bornean orangutan</name>
    <dbReference type="NCBI Taxonomy" id="9600"/>
    <lineage>
        <taxon>Eukaryota</taxon>
        <taxon>Metazoa</taxon>
        <taxon>Chordata</taxon>
        <taxon>Craniata</taxon>
        <taxon>Vertebrata</taxon>
        <taxon>Euteleostomi</taxon>
        <taxon>Mammalia</taxon>
        <taxon>Eutheria</taxon>
        <taxon>Euarchontoglires</taxon>
        <taxon>Primates</taxon>
        <taxon>Haplorrhini</taxon>
        <taxon>Catarrhini</taxon>
        <taxon>Hominidae</taxon>
        <taxon>Pongo</taxon>
    </lineage>
</organism>
<accession>A4H216</accession>
<evidence type="ECO:0000250" key="1"/>
<evidence type="ECO:0000255" key="2"/>
<evidence type="ECO:0000305" key="3"/>
<comment type="function">
    <text evidence="1">Has antibacterial activity.</text>
</comment>
<comment type="subcellular location">
    <subcellularLocation>
        <location evidence="1">Secreted</location>
    </subcellularLocation>
</comment>
<comment type="similarity">
    <text evidence="3">Belongs to the beta-defensin family.</text>
</comment>
<proteinExistence type="inferred from homology"/>
<name>D107A_PONPY</name>
<dbReference type="EMBL" id="AM410121">
    <property type="protein sequence ID" value="CAL68936.1"/>
    <property type="molecule type" value="Genomic_DNA"/>
</dbReference>
<dbReference type="SMR" id="A4H216"/>
<dbReference type="GO" id="GO:0005576">
    <property type="term" value="C:extracellular region"/>
    <property type="evidence" value="ECO:0007669"/>
    <property type="project" value="UniProtKB-SubCell"/>
</dbReference>
<dbReference type="GO" id="GO:0042742">
    <property type="term" value="P:defense response to bacterium"/>
    <property type="evidence" value="ECO:0007669"/>
    <property type="project" value="UniProtKB-KW"/>
</dbReference>
<dbReference type="GO" id="GO:0045087">
    <property type="term" value="P:innate immune response"/>
    <property type="evidence" value="ECO:0007669"/>
    <property type="project" value="InterPro"/>
</dbReference>
<dbReference type="InterPro" id="IPR025933">
    <property type="entry name" value="Beta_defensin_dom"/>
</dbReference>
<dbReference type="Pfam" id="PF13841">
    <property type="entry name" value="Defensin_beta_2"/>
    <property type="match status" value="1"/>
</dbReference>
<keyword id="KW-0044">Antibiotic</keyword>
<keyword id="KW-0929">Antimicrobial</keyword>
<keyword id="KW-0211">Defensin</keyword>
<keyword id="KW-1015">Disulfide bond</keyword>
<keyword id="KW-0964">Secreted</keyword>
<keyword id="KW-0732">Signal</keyword>
<reference key="1">
    <citation type="submission" date="2006-11" db="EMBL/GenBank/DDBJ databases">
        <title>Evolution and sequence variation of human beta-defensin genes.</title>
        <authorList>
            <person name="Hollox E.J."/>
            <person name="Armour J.A.L."/>
        </authorList>
    </citation>
    <scope>NUCLEOTIDE SEQUENCE [GENOMIC DNA]</scope>
</reference>